<keyword id="KW-0067">ATP-binding</keyword>
<keyword id="KW-0963">Cytoplasm</keyword>
<keyword id="KW-0418">Kinase</keyword>
<keyword id="KW-0545">Nucleotide biosynthesis</keyword>
<keyword id="KW-0547">Nucleotide-binding</keyword>
<keyword id="KW-1185">Reference proteome</keyword>
<keyword id="KW-0808">Transferase</keyword>
<accession>A6LD69</accession>
<evidence type="ECO:0000255" key="1">
    <source>
        <dbReference type="HAMAP-Rule" id="MF_00235"/>
    </source>
</evidence>
<feature type="chain" id="PRO_1000058869" description="Adenylate kinase">
    <location>
        <begin position="1"/>
        <end position="190"/>
    </location>
</feature>
<feature type="region of interest" description="NMP" evidence="1">
    <location>
        <begin position="31"/>
        <end position="60"/>
    </location>
</feature>
<feature type="region of interest" description="LID" evidence="1">
    <location>
        <begin position="127"/>
        <end position="137"/>
    </location>
</feature>
<feature type="binding site" evidence="1">
    <location>
        <begin position="11"/>
        <end position="16"/>
    </location>
    <ligand>
        <name>ATP</name>
        <dbReference type="ChEBI" id="CHEBI:30616"/>
    </ligand>
</feature>
<feature type="binding site" evidence="1">
    <location>
        <position position="32"/>
    </location>
    <ligand>
        <name>AMP</name>
        <dbReference type="ChEBI" id="CHEBI:456215"/>
    </ligand>
</feature>
<feature type="binding site" evidence="1">
    <location>
        <position position="37"/>
    </location>
    <ligand>
        <name>AMP</name>
        <dbReference type="ChEBI" id="CHEBI:456215"/>
    </ligand>
</feature>
<feature type="binding site" evidence="1">
    <location>
        <begin position="58"/>
        <end position="60"/>
    </location>
    <ligand>
        <name>AMP</name>
        <dbReference type="ChEBI" id="CHEBI:456215"/>
    </ligand>
</feature>
<feature type="binding site" evidence="1">
    <location>
        <begin position="86"/>
        <end position="89"/>
    </location>
    <ligand>
        <name>AMP</name>
        <dbReference type="ChEBI" id="CHEBI:456215"/>
    </ligand>
</feature>
<feature type="binding site" evidence="1">
    <location>
        <position position="93"/>
    </location>
    <ligand>
        <name>AMP</name>
        <dbReference type="ChEBI" id="CHEBI:456215"/>
    </ligand>
</feature>
<feature type="binding site" evidence="1">
    <location>
        <position position="128"/>
    </location>
    <ligand>
        <name>ATP</name>
        <dbReference type="ChEBI" id="CHEBI:30616"/>
    </ligand>
</feature>
<feature type="binding site" evidence="1">
    <location>
        <position position="134"/>
    </location>
    <ligand>
        <name>AMP</name>
        <dbReference type="ChEBI" id="CHEBI:456215"/>
    </ligand>
</feature>
<feature type="binding site" evidence="1">
    <location>
        <position position="145"/>
    </location>
    <ligand>
        <name>AMP</name>
        <dbReference type="ChEBI" id="CHEBI:456215"/>
    </ligand>
</feature>
<feature type="binding site" evidence="1">
    <location>
        <position position="173"/>
    </location>
    <ligand>
        <name>ATP</name>
        <dbReference type="ChEBI" id="CHEBI:30616"/>
    </ligand>
</feature>
<comment type="function">
    <text evidence="1">Catalyzes the reversible transfer of the terminal phosphate group between ATP and AMP. Plays an important role in cellular energy homeostasis and in adenine nucleotide metabolism.</text>
</comment>
<comment type="catalytic activity">
    <reaction evidence="1">
        <text>AMP + ATP = 2 ADP</text>
        <dbReference type="Rhea" id="RHEA:12973"/>
        <dbReference type="ChEBI" id="CHEBI:30616"/>
        <dbReference type="ChEBI" id="CHEBI:456215"/>
        <dbReference type="ChEBI" id="CHEBI:456216"/>
        <dbReference type="EC" id="2.7.4.3"/>
    </reaction>
</comment>
<comment type="pathway">
    <text evidence="1">Purine metabolism; AMP biosynthesis via salvage pathway; AMP from ADP: step 1/1.</text>
</comment>
<comment type="subunit">
    <text evidence="1">Monomer.</text>
</comment>
<comment type="subcellular location">
    <subcellularLocation>
        <location evidence="1">Cytoplasm</location>
    </subcellularLocation>
</comment>
<comment type="domain">
    <text evidence="1">Consists of three domains, a large central CORE domain and two small peripheral domains, NMPbind and LID, which undergo movements during catalysis. The LID domain closes over the site of phosphoryl transfer upon ATP binding. Assembling and dissambling the active center during each catalytic cycle provides an effective means to prevent ATP hydrolysis.</text>
</comment>
<comment type="similarity">
    <text evidence="1">Belongs to the adenylate kinase family.</text>
</comment>
<proteinExistence type="inferred from homology"/>
<gene>
    <name evidence="1" type="primary">adk</name>
    <name type="ordered locus">BDI_1898</name>
</gene>
<protein>
    <recommendedName>
        <fullName evidence="1">Adenylate kinase</fullName>
        <shortName evidence="1">AK</shortName>
        <ecNumber evidence="1">2.7.4.3</ecNumber>
    </recommendedName>
    <alternativeName>
        <fullName evidence="1">ATP-AMP transphosphorylase</fullName>
    </alternativeName>
    <alternativeName>
        <fullName evidence="1">ATP:AMP phosphotransferase</fullName>
    </alternativeName>
    <alternativeName>
        <fullName evidence="1">Adenylate monophosphate kinase</fullName>
    </alternativeName>
</protein>
<organism>
    <name type="scientific">Parabacteroides distasonis (strain ATCC 8503 / DSM 20701 / CIP 104284 / JCM 5825 / NCTC 11152)</name>
    <dbReference type="NCBI Taxonomy" id="435591"/>
    <lineage>
        <taxon>Bacteria</taxon>
        <taxon>Pseudomonadati</taxon>
        <taxon>Bacteroidota</taxon>
        <taxon>Bacteroidia</taxon>
        <taxon>Bacteroidales</taxon>
        <taxon>Tannerellaceae</taxon>
        <taxon>Parabacteroides</taxon>
    </lineage>
</organism>
<sequence length="190" mass="20939">MLNVVIFGAPGSGKGTQSELIIKEYGLDHISTGDVLRGEMKAETELGKIAKDYIEKGQLVPDELIVDMLANVLDSKKPAKGVIFDGFPRTIPQAKALKKMLNERGTDVSVMLNLQVEEEELIKRLLERGKVSGRSDDNLETIKSRLDVYHTQTAPLADYYVGEGKHVAIKGMGTIEEIFGRIKEAVNNVK</sequence>
<reference key="1">
    <citation type="journal article" date="2007" name="PLoS Biol.">
        <title>Evolution of symbiotic bacteria in the distal human intestine.</title>
        <authorList>
            <person name="Xu J."/>
            <person name="Mahowald M.A."/>
            <person name="Ley R.E."/>
            <person name="Lozupone C.A."/>
            <person name="Hamady M."/>
            <person name="Martens E.C."/>
            <person name="Henrissat B."/>
            <person name="Coutinho P.M."/>
            <person name="Minx P."/>
            <person name="Latreille P."/>
            <person name="Cordum H."/>
            <person name="Van Brunt A."/>
            <person name="Kim K."/>
            <person name="Fulton R.S."/>
            <person name="Fulton L.A."/>
            <person name="Clifton S.W."/>
            <person name="Wilson R.K."/>
            <person name="Knight R.D."/>
            <person name="Gordon J.I."/>
        </authorList>
    </citation>
    <scope>NUCLEOTIDE SEQUENCE [LARGE SCALE GENOMIC DNA]</scope>
    <source>
        <strain>ATCC 8503 / DSM 20701 / CIP 104284 / JCM 5825 / NCTC 11152</strain>
    </source>
</reference>
<dbReference type="EC" id="2.7.4.3" evidence="1"/>
<dbReference type="EMBL" id="CP000140">
    <property type="protein sequence ID" value="ABR43633.1"/>
    <property type="molecule type" value="Genomic_DNA"/>
</dbReference>
<dbReference type="RefSeq" id="WP_005854805.1">
    <property type="nucleotide sequence ID" value="NZ_LR215978.1"/>
</dbReference>
<dbReference type="SMR" id="A6LD69"/>
<dbReference type="STRING" id="435591.BDI_1898"/>
<dbReference type="PaxDb" id="435591-BDI_1898"/>
<dbReference type="KEGG" id="pdi:BDI_1898"/>
<dbReference type="eggNOG" id="COG0563">
    <property type="taxonomic scope" value="Bacteria"/>
</dbReference>
<dbReference type="HOGENOM" id="CLU_032354_4_1_10"/>
<dbReference type="BioCyc" id="PDIS435591:G1G5A-1951-MONOMER"/>
<dbReference type="UniPathway" id="UPA00588">
    <property type="reaction ID" value="UER00649"/>
</dbReference>
<dbReference type="Proteomes" id="UP000000566">
    <property type="component" value="Chromosome"/>
</dbReference>
<dbReference type="GO" id="GO:0005737">
    <property type="term" value="C:cytoplasm"/>
    <property type="evidence" value="ECO:0007669"/>
    <property type="project" value="UniProtKB-SubCell"/>
</dbReference>
<dbReference type="GO" id="GO:0004017">
    <property type="term" value="F:adenylate kinase activity"/>
    <property type="evidence" value="ECO:0007669"/>
    <property type="project" value="UniProtKB-UniRule"/>
</dbReference>
<dbReference type="GO" id="GO:0005524">
    <property type="term" value="F:ATP binding"/>
    <property type="evidence" value="ECO:0007669"/>
    <property type="project" value="UniProtKB-UniRule"/>
</dbReference>
<dbReference type="GO" id="GO:0044209">
    <property type="term" value="P:AMP salvage"/>
    <property type="evidence" value="ECO:0007669"/>
    <property type="project" value="UniProtKB-UniRule"/>
</dbReference>
<dbReference type="CDD" id="cd01428">
    <property type="entry name" value="ADK"/>
    <property type="match status" value="1"/>
</dbReference>
<dbReference type="Gene3D" id="3.40.50.300">
    <property type="entry name" value="P-loop containing nucleotide triphosphate hydrolases"/>
    <property type="match status" value="1"/>
</dbReference>
<dbReference type="HAMAP" id="MF_00235">
    <property type="entry name" value="Adenylate_kinase_Adk"/>
    <property type="match status" value="1"/>
</dbReference>
<dbReference type="InterPro" id="IPR000850">
    <property type="entry name" value="Adenylat/UMP-CMP_kin"/>
</dbReference>
<dbReference type="InterPro" id="IPR033690">
    <property type="entry name" value="Adenylat_kinase_CS"/>
</dbReference>
<dbReference type="InterPro" id="IPR027417">
    <property type="entry name" value="P-loop_NTPase"/>
</dbReference>
<dbReference type="NCBIfam" id="NF001381">
    <property type="entry name" value="PRK00279.1-3"/>
    <property type="match status" value="1"/>
</dbReference>
<dbReference type="NCBIfam" id="NF011100">
    <property type="entry name" value="PRK14527.1"/>
    <property type="match status" value="1"/>
</dbReference>
<dbReference type="NCBIfam" id="NF011104">
    <property type="entry name" value="PRK14531.1"/>
    <property type="match status" value="1"/>
</dbReference>
<dbReference type="NCBIfam" id="NF011105">
    <property type="entry name" value="PRK14532.1"/>
    <property type="match status" value="1"/>
</dbReference>
<dbReference type="PANTHER" id="PTHR23359">
    <property type="entry name" value="NUCLEOTIDE KINASE"/>
    <property type="match status" value="1"/>
</dbReference>
<dbReference type="Pfam" id="PF00406">
    <property type="entry name" value="ADK"/>
    <property type="match status" value="1"/>
</dbReference>
<dbReference type="PRINTS" id="PR00094">
    <property type="entry name" value="ADENYLTKNASE"/>
</dbReference>
<dbReference type="SUPFAM" id="SSF52540">
    <property type="entry name" value="P-loop containing nucleoside triphosphate hydrolases"/>
    <property type="match status" value="1"/>
</dbReference>
<dbReference type="PROSITE" id="PS00113">
    <property type="entry name" value="ADENYLATE_KINASE"/>
    <property type="match status" value="1"/>
</dbReference>
<name>KAD_PARD8</name>